<protein>
    <recommendedName>
        <fullName evidence="1">Protein ApaG</fullName>
    </recommendedName>
</protein>
<proteinExistence type="inferred from homology"/>
<feature type="chain" id="PRO_1000083666" description="Protein ApaG">
    <location>
        <begin position="1"/>
        <end position="126"/>
    </location>
</feature>
<feature type="domain" description="ApaG" evidence="1">
    <location>
        <begin position="2"/>
        <end position="126"/>
    </location>
</feature>
<dbReference type="EMBL" id="CP000627">
    <property type="protein sequence ID" value="ABQ21526.1"/>
    <property type="molecule type" value="Genomic_DNA"/>
</dbReference>
<dbReference type="EMBL" id="CP001235">
    <property type="protein sequence ID" value="ACP08506.1"/>
    <property type="molecule type" value="Genomic_DNA"/>
</dbReference>
<dbReference type="RefSeq" id="WP_000383338.1">
    <property type="nucleotide sequence ID" value="NZ_JAACZH010000015.1"/>
</dbReference>
<dbReference type="SMR" id="A5F8N1"/>
<dbReference type="GeneID" id="89515409"/>
<dbReference type="KEGG" id="vco:VC0395_A2860"/>
<dbReference type="KEGG" id="vcr:VC395_0486"/>
<dbReference type="PATRIC" id="fig|345073.21.peg.473"/>
<dbReference type="eggNOG" id="COG2967">
    <property type="taxonomic scope" value="Bacteria"/>
</dbReference>
<dbReference type="HOGENOM" id="CLU_128074_0_0_6"/>
<dbReference type="OrthoDB" id="9795226at2"/>
<dbReference type="Proteomes" id="UP000000249">
    <property type="component" value="Chromosome 2"/>
</dbReference>
<dbReference type="GO" id="GO:0070987">
    <property type="term" value="P:error-free translesion synthesis"/>
    <property type="evidence" value="ECO:0007669"/>
    <property type="project" value="TreeGrafter"/>
</dbReference>
<dbReference type="Gene3D" id="2.60.40.1470">
    <property type="entry name" value="ApaG domain"/>
    <property type="match status" value="1"/>
</dbReference>
<dbReference type="HAMAP" id="MF_00791">
    <property type="entry name" value="ApaG"/>
    <property type="match status" value="1"/>
</dbReference>
<dbReference type="InterPro" id="IPR007474">
    <property type="entry name" value="ApaG_domain"/>
</dbReference>
<dbReference type="InterPro" id="IPR036767">
    <property type="entry name" value="ApaG_sf"/>
</dbReference>
<dbReference type="InterPro" id="IPR023065">
    <property type="entry name" value="Uncharacterised_ApaG"/>
</dbReference>
<dbReference type="NCBIfam" id="NF003967">
    <property type="entry name" value="PRK05461.1"/>
    <property type="match status" value="1"/>
</dbReference>
<dbReference type="PANTHER" id="PTHR14289">
    <property type="entry name" value="F-BOX ONLY PROTEIN 3"/>
    <property type="match status" value="1"/>
</dbReference>
<dbReference type="PANTHER" id="PTHR14289:SF16">
    <property type="entry name" value="POLYMERASE DELTA-INTERACTING PROTEIN 2"/>
    <property type="match status" value="1"/>
</dbReference>
<dbReference type="Pfam" id="PF04379">
    <property type="entry name" value="DUF525"/>
    <property type="match status" value="1"/>
</dbReference>
<dbReference type="SUPFAM" id="SSF110069">
    <property type="entry name" value="ApaG-like"/>
    <property type="match status" value="1"/>
</dbReference>
<dbReference type="PROSITE" id="PS51087">
    <property type="entry name" value="APAG"/>
    <property type="match status" value="1"/>
</dbReference>
<organism>
    <name type="scientific">Vibrio cholerae serotype O1 (strain ATCC 39541 / Classical Ogawa 395 / O395)</name>
    <dbReference type="NCBI Taxonomy" id="345073"/>
    <lineage>
        <taxon>Bacteria</taxon>
        <taxon>Pseudomonadati</taxon>
        <taxon>Pseudomonadota</taxon>
        <taxon>Gammaproteobacteria</taxon>
        <taxon>Vibrionales</taxon>
        <taxon>Vibrionaceae</taxon>
        <taxon>Vibrio</taxon>
    </lineage>
</organism>
<reference key="1">
    <citation type="submission" date="2007-03" db="EMBL/GenBank/DDBJ databases">
        <authorList>
            <person name="Heidelberg J."/>
        </authorList>
    </citation>
    <scope>NUCLEOTIDE SEQUENCE [LARGE SCALE GENOMIC DNA]</scope>
    <source>
        <strain>ATCC 39541 / Classical Ogawa 395 / O395</strain>
    </source>
</reference>
<reference key="2">
    <citation type="journal article" date="2008" name="PLoS ONE">
        <title>A recalibrated molecular clock and independent origins for the cholera pandemic clones.</title>
        <authorList>
            <person name="Feng L."/>
            <person name="Reeves P.R."/>
            <person name="Lan R."/>
            <person name="Ren Y."/>
            <person name="Gao C."/>
            <person name="Zhou Z."/>
            <person name="Ren Y."/>
            <person name="Cheng J."/>
            <person name="Wang W."/>
            <person name="Wang J."/>
            <person name="Qian W."/>
            <person name="Li D."/>
            <person name="Wang L."/>
        </authorList>
    </citation>
    <scope>NUCLEOTIDE SEQUENCE [LARGE SCALE GENOMIC DNA]</scope>
    <source>
        <strain>ATCC 39541 / Classical Ogawa 395 / O395</strain>
    </source>
</reference>
<name>APAG_VIBC3</name>
<accession>A5F8N1</accession>
<accession>C3M4N4</accession>
<evidence type="ECO:0000255" key="1">
    <source>
        <dbReference type="HAMAP-Rule" id="MF_00791"/>
    </source>
</evidence>
<gene>
    <name evidence="1" type="primary">apaG</name>
    <name type="ordered locus">VC0395_A2860</name>
    <name type="ordered locus">VC395_0486</name>
</gene>
<sequence>MDVSLPCIKIQVQTRYIEEQSNPEYQRFVFAYLITIKNLSSQTVQLMSRRWLITDADGKQTVVEGDGVVGEQPRIKANDEYTYSSGTALDTPVGVMQGQYLMIDEQGESFTVEIEPFRLAVPHVLN</sequence>